<dbReference type="EC" id="2.3.1.225" evidence="1"/>
<dbReference type="EMBL" id="U20865">
    <property type="protein sequence ID" value="AAB67393.1"/>
    <property type="molecule type" value="Genomic_DNA"/>
</dbReference>
<dbReference type="EMBL" id="AY692913">
    <property type="protein sequence ID" value="AAT92932.1"/>
    <property type="molecule type" value="Genomic_DNA"/>
</dbReference>
<dbReference type="EMBL" id="BK006945">
    <property type="protein sequence ID" value="DAA09560.1"/>
    <property type="molecule type" value="Genomic_DNA"/>
</dbReference>
<dbReference type="PIR" id="S59392">
    <property type="entry name" value="S59392"/>
</dbReference>
<dbReference type="RefSeq" id="NP_013347.1">
    <property type="nucleotide sequence ID" value="NM_001182133.1"/>
</dbReference>
<dbReference type="PDB" id="8HFC">
    <property type="method" value="EM"/>
    <property type="resolution" value="3.50 A"/>
    <property type="chains" value="A=1-359"/>
</dbReference>
<dbReference type="PDBsum" id="8HFC"/>
<dbReference type="EMDB" id="EMD-34717"/>
<dbReference type="SMR" id="Q06551"/>
<dbReference type="BioGRID" id="31513">
    <property type="interactions" value="80"/>
</dbReference>
<dbReference type="ComplexPortal" id="CPX-813">
    <property type="entry name" value="Palmitoyltransferase ERF2/SHR5 complex"/>
</dbReference>
<dbReference type="DIP" id="DIP-4783N"/>
<dbReference type="FunCoup" id="Q06551">
    <property type="interactions" value="216"/>
</dbReference>
<dbReference type="IntAct" id="Q06551">
    <property type="interactions" value="2"/>
</dbReference>
<dbReference type="MINT" id="Q06551"/>
<dbReference type="STRING" id="4932.YLR246W"/>
<dbReference type="iPTMnet" id="Q06551"/>
<dbReference type="SwissPalm" id="Q06551"/>
<dbReference type="PaxDb" id="4932-YLR246W"/>
<dbReference type="PeptideAtlas" id="Q06551"/>
<dbReference type="EnsemblFungi" id="YLR246W_mRNA">
    <property type="protein sequence ID" value="YLR246W"/>
    <property type="gene ID" value="YLR246W"/>
</dbReference>
<dbReference type="GeneID" id="850947"/>
<dbReference type="KEGG" id="sce:YLR246W"/>
<dbReference type="AGR" id="SGD:S000004236"/>
<dbReference type="SGD" id="S000004236">
    <property type="gene designation" value="ERF2"/>
</dbReference>
<dbReference type="VEuPathDB" id="FungiDB:YLR246W"/>
<dbReference type="eggNOG" id="KOG1311">
    <property type="taxonomic scope" value="Eukaryota"/>
</dbReference>
<dbReference type="GeneTree" id="ENSGT00940000174593"/>
<dbReference type="HOGENOM" id="CLU_047581_0_0_1"/>
<dbReference type="InParanoid" id="Q06551"/>
<dbReference type="OMA" id="YVTMFLI"/>
<dbReference type="OrthoDB" id="9909019at2759"/>
<dbReference type="BioCyc" id="YEAST:G3O-32351-MONOMER"/>
<dbReference type="BRENDA" id="2.3.1.225">
    <property type="organism ID" value="984"/>
</dbReference>
<dbReference type="BioGRID-ORCS" id="850947">
    <property type="hits" value="7 hits in 10 CRISPR screens"/>
</dbReference>
<dbReference type="PRO" id="PR:Q06551"/>
<dbReference type="Proteomes" id="UP000002311">
    <property type="component" value="Chromosome XII"/>
</dbReference>
<dbReference type="RNAct" id="Q06551">
    <property type="molecule type" value="protein"/>
</dbReference>
<dbReference type="GO" id="GO:0032541">
    <property type="term" value="C:cortical endoplasmic reticulum"/>
    <property type="evidence" value="ECO:0000314"/>
    <property type="project" value="UniProtKB"/>
</dbReference>
<dbReference type="GO" id="GO:0005783">
    <property type="term" value="C:endoplasmic reticulum"/>
    <property type="evidence" value="ECO:0000318"/>
    <property type="project" value="GO_Central"/>
</dbReference>
<dbReference type="GO" id="GO:0005789">
    <property type="term" value="C:endoplasmic reticulum membrane"/>
    <property type="evidence" value="ECO:0000314"/>
    <property type="project" value="ComplexPortal"/>
</dbReference>
<dbReference type="GO" id="GO:0031211">
    <property type="term" value="C:endoplasmic reticulum palmitoyltransferase complex"/>
    <property type="evidence" value="ECO:0000353"/>
    <property type="project" value="ComplexPortal"/>
</dbReference>
<dbReference type="GO" id="GO:0005794">
    <property type="term" value="C:Golgi apparatus"/>
    <property type="evidence" value="ECO:0000318"/>
    <property type="project" value="GO_Central"/>
</dbReference>
<dbReference type="GO" id="GO:0097038">
    <property type="term" value="C:perinuclear endoplasmic reticulum"/>
    <property type="evidence" value="ECO:0000314"/>
    <property type="project" value="UniProtKB"/>
</dbReference>
<dbReference type="GO" id="GO:0016409">
    <property type="term" value="F:palmitoyltransferase activity"/>
    <property type="evidence" value="ECO:0000314"/>
    <property type="project" value="UniProtKB"/>
</dbReference>
<dbReference type="GO" id="GO:0019706">
    <property type="term" value="F:protein-cysteine S-palmitoyltransferase activity"/>
    <property type="evidence" value="ECO:0000318"/>
    <property type="project" value="GO_Central"/>
</dbReference>
<dbReference type="GO" id="GO:0018345">
    <property type="term" value="P:protein palmitoylation"/>
    <property type="evidence" value="ECO:0000314"/>
    <property type="project" value="UniProtKB"/>
</dbReference>
<dbReference type="GO" id="GO:0006612">
    <property type="term" value="P:protein targeting to membrane"/>
    <property type="evidence" value="ECO:0000315"/>
    <property type="project" value="SGD"/>
</dbReference>
<dbReference type="InterPro" id="IPR001594">
    <property type="entry name" value="Palmitoyltrfase_DHHC"/>
</dbReference>
<dbReference type="InterPro" id="IPR039859">
    <property type="entry name" value="PFA4/ZDH16/20/ERF2-like"/>
</dbReference>
<dbReference type="PANTHER" id="PTHR22883:SF43">
    <property type="entry name" value="PALMITOYLTRANSFERASE APP"/>
    <property type="match status" value="1"/>
</dbReference>
<dbReference type="PANTHER" id="PTHR22883">
    <property type="entry name" value="ZINC FINGER DHHC DOMAIN CONTAINING PROTEIN"/>
    <property type="match status" value="1"/>
</dbReference>
<dbReference type="Pfam" id="PF01529">
    <property type="entry name" value="DHHC"/>
    <property type="match status" value="1"/>
</dbReference>
<dbReference type="PROSITE" id="PS50216">
    <property type="entry name" value="DHHC"/>
    <property type="match status" value="1"/>
</dbReference>
<feature type="chain" id="PRO_0000212948" description="Palmitoyltransferase ERF2">
    <location>
        <begin position="1"/>
        <end position="359"/>
    </location>
</feature>
<feature type="topological domain" description="Cytoplasmic" evidence="3">
    <location>
        <begin position="1"/>
        <end position="75"/>
    </location>
</feature>
<feature type="transmembrane region" description="Helical" evidence="3">
    <location>
        <begin position="76"/>
        <end position="96"/>
    </location>
</feature>
<feature type="topological domain" description="Lumenal" evidence="3">
    <location>
        <begin position="97"/>
        <end position="104"/>
    </location>
</feature>
<feature type="transmembrane region" description="Helical" evidence="3">
    <location>
        <begin position="105"/>
        <end position="125"/>
    </location>
</feature>
<feature type="topological domain" description="Cytoplasmic" evidence="3">
    <location>
        <begin position="126"/>
        <end position="217"/>
    </location>
</feature>
<feature type="transmembrane region" description="Helical" evidence="3">
    <location>
        <begin position="218"/>
        <end position="238"/>
    </location>
</feature>
<feature type="topological domain" description="Lumenal" evidence="3">
    <location>
        <begin position="239"/>
        <end position="250"/>
    </location>
</feature>
<feature type="transmembrane region" description="Helical" evidence="3">
    <location>
        <begin position="251"/>
        <end position="271"/>
    </location>
</feature>
<feature type="topological domain" description="Cytoplasmic" evidence="3">
    <location>
        <begin position="272"/>
        <end position="359"/>
    </location>
</feature>
<feature type="domain" description="DHHC" evidence="4">
    <location>
        <begin position="173"/>
        <end position="223"/>
    </location>
</feature>
<feature type="region of interest" description="Disordered" evidence="5">
    <location>
        <begin position="1"/>
        <end position="21"/>
    </location>
</feature>
<feature type="active site" description="S-palmitoyl cysteine intermediate" evidence="1">
    <location>
        <position position="203"/>
    </location>
</feature>
<feature type="mutagenesis site" description="In ERF2-1; loss of function." evidence="6">
    <original>K</original>
    <variation>E</variation>
    <location>
        <position position="173"/>
    </location>
</feature>
<feature type="mutagenesis site" description="In ERF2-7; loss of function." evidence="6">
    <original>R</original>
    <variation>Q</variation>
    <location>
        <position position="182"/>
    </location>
</feature>
<feature type="mutagenesis site" description="Abolishes palmitoyltransferase activity and interaction with SHR5." evidence="6 7">
    <original>C</original>
    <variation>S</variation>
    <location>
        <position position="189"/>
    </location>
</feature>
<feature type="mutagenesis site" description="Loss of function." evidence="6">
    <original>D</original>
    <variation>A</variation>
    <location>
        <position position="200"/>
    </location>
</feature>
<feature type="mutagenesis site" description="Abolishes palmitoyltransferase activity." evidence="7">
    <original>H</original>
    <variation>A</variation>
    <location>
        <position position="201"/>
    </location>
</feature>
<feature type="mutagenesis site" description="Abolishes palmitoyltransferase activity." evidence="7">
    <original>C</original>
    <variation>S</variation>
    <location>
        <position position="203"/>
    </location>
</feature>
<feature type="mutagenesis site" description="In ERF2-2; loss of function." evidence="6">
    <original>F</original>
    <variation>S</variation>
    <location>
        <position position="218"/>
    </location>
</feature>
<feature type="sequence conflict" description="In Ref. 3; AAT92932." evidence="9" ref="3">
    <original>R</original>
    <variation>M</variation>
    <location>
        <position position="68"/>
    </location>
</feature>
<feature type="helix" evidence="10">
    <location>
        <begin position="77"/>
        <end position="93"/>
    </location>
</feature>
<feature type="turn" evidence="10">
    <location>
        <begin position="94"/>
        <end position="100"/>
    </location>
</feature>
<feature type="strand" evidence="10">
    <location>
        <begin position="101"/>
        <end position="105"/>
    </location>
</feature>
<feature type="helix" evidence="10">
    <location>
        <begin position="107"/>
        <end position="128"/>
    </location>
</feature>
<feature type="strand" evidence="10">
    <location>
        <begin position="137"/>
        <end position="140"/>
    </location>
</feature>
<feature type="turn" evidence="10">
    <location>
        <begin position="146"/>
        <end position="148"/>
    </location>
</feature>
<feature type="turn" evidence="10">
    <location>
        <begin position="153"/>
        <end position="155"/>
    </location>
</feature>
<feature type="strand" evidence="10">
    <location>
        <begin position="158"/>
        <end position="160"/>
    </location>
</feature>
<feature type="strand" evidence="10">
    <location>
        <begin position="164"/>
        <end position="166"/>
    </location>
</feature>
<feature type="strand" evidence="10">
    <location>
        <begin position="170"/>
        <end position="172"/>
    </location>
</feature>
<feature type="turn" evidence="10">
    <location>
        <begin position="176"/>
        <end position="179"/>
    </location>
</feature>
<feature type="strand" evidence="10">
    <location>
        <begin position="187"/>
        <end position="189"/>
    </location>
</feature>
<feature type="turn" evidence="10">
    <location>
        <begin position="190"/>
        <end position="193"/>
    </location>
</feature>
<feature type="strand" evidence="10">
    <location>
        <begin position="194"/>
        <end position="196"/>
    </location>
</feature>
<feature type="turn" evidence="10">
    <location>
        <begin position="204"/>
        <end position="207"/>
    </location>
</feature>
<feature type="strand" evidence="10">
    <location>
        <begin position="212"/>
        <end position="214"/>
    </location>
</feature>
<feature type="helix" evidence="10">
    <location>
        <begin position="215"/>
        <end position="242"/>
    </location>
</feature>
<feature type="helix" evidence="10">
    <location>
        <begin position="247"/>
        <end position="249"/>
    </location>
</feature>
<feature type="helix" evidence="10">
    <location>
        <begin position="251"/>
        <end position="263"/>
    </location>
</feature>
<feature type="helix" evidence="10">
    <location>
        <begin position="265"/>
        <end position="278"/>
    </location>
</feature>
<feature type="turn" evidence="10">
    <location>
        <begin position="279"/>
        <end position="281"/>
    </location>
</feature>
<feature type="helix" evidence="10">
    <location>
        <begin position="284"/>
        <end position="290"/>
    </location>
</feature>
<feature type="turn" evidence="10">
    <location>
        <begin position="291"/>
        <end position="293"/>
    </location>
</feature>
<feature type="strand" evidence="10">
    <location>
        <begin position="297"/>
        <end position="300"/>
    </location>
</feature>
<feature type="helix" evidence="10">
    <location>
        <begin position="314"/>
        <end position="322"/>
    </location>
</feature>
<feature type="turn" evidence="10">
    <location>
        <begin position="336"/>
        <end position="338"/>
    </location>
</feature>
<feature type="strand" evidence="10">
    <location>
        <begin position="342"/>
        <end position="345"/>
    </location>
</feature>
<name>ERFB_YEAST</name>
<gene>
    <name type="primary">ERF2</name>
    <name type="ordered locus">YLR246W</name>
</gene>
<accession>Q06551</accession>
<accession>D6VYP4</accession>
<accession>Q6B217</accession>
<organism>
    <name type="scientific">Saccharomyces cerevisiae (strain ATCC 204508 / S288c)</name>
    <name type="common">Baker's yeast</name>
    <dbReference type="NCBI Taxonomy" id="559292"/>
    <lineage>
        <taxon>Eukaryota</taxon>
        <taxon>Fungi</taxon>
        <taxon>Dikarya</taxon>
        <taxon>Ascomycota</taxon>
        <taxon>Saccharomycotina</taxon>
        <taxon>Saccharomycetes</taxon>
        <taxon>Saccharomycetales</taxon>
        <taxon>Saccharomycetaceae</taxon>
        <taxon>Saccharomyces</taxon>
    </lineage>
</organism>
<protein>
    <recommendedName>
        <fullName>Palmitoyltransferase ERF2</fullName>
        <ecNumber evidence="1">2.3.1.225</ecNumber>
    </recommendedName>
    <alternativeName>
        <fullName>DHHC cysteine-rich domain-containing protein ERF2</fullName>
    </alternativeName>
    <alternativeName>
        <fullName>Ras protein acyltransferase</fullName>
    </alternativeName>
</protein>
<reference key="1">
    <citation type="journal article" date="1997" name="Nature">
        <title>The nucleotide sequence of Saccharomyces cerevisiae chromosome XII.</title>
        <authorList>
            <person name="Johnston M."/>
            <person name="Hillier L.W."/>
            <person name="Riles L."/>
            <person name="Albermann K."/>
            <person name="Andre B."/>
            <person name="Ansorge W."/>
            <person name="Benes V."/>
            <person name="Brueckner M."/>
            <person name="Delius H."/>
            <person name="Dubois E."/>
            <person name="Duesterhoeft A."/>
            <person name="Entian K.-D."/>
            <person name="Floeth M."/>
            <person name="Goffeau A."/>
            <person name="Hebling U."/>
            <person name="Heumann K."/>
            <person name="Heuss-Neitzel D."/>
            <person name="Hilbert H."/>
            <person name="Hilger F."/>
            <person name="Kleine K."/>
            <person name="Koetter P."/>
            <person name="Louis E.J."/>
            <person name="Messenguy F."/>
            <person name="Mewes H.-W."/>
            <person name="Miosga T."/>
            <person name="Moestl D."/>
            <person name="Mueller-Auer S."/>
            <person name="Nentwich U."/>
            <person name="Obermaier B."/>
            <person name="Piravandi E."/>
            <person name="Pohl T.M."/>
            <person name="Portetelle D."/>
            <person name="Purnelle B."/>
            <person name="Rechmann S."/>
            <person name="Rieger M."/>
            <person name="Rinke M."/>
            <person name="Rose M."/>
            <person name="Scharfe M."/>
            <person name="Scherens B."/>
            <person name="Scholler P."/>
            <person name="Schwager C."/>
            <person name="Schwarz S."/>
            <person name="Underwood A.P."/>
            <person name="Urrestarazu L.A."/>
            <person name="Vandenbol M."/>
            <person name="Verhasselt P."/>
            <person name="Vierendeels F."/>
            <person name="Voet M."/>
            <person name="Volckaert G."/>
            <person name="Voss H."/>
            <person name="Wambutt R."/>
            <person name="Wedler E."/>
            <person name="Wedler H."/>
            <person name="Zimmermann F.K."/>
            <person name="Zollner A."/>
            <person name="Hani J."/>
            <person name="Hoheisel J.D."/>
        </authorList>
    </citation>
    <scope>NUCLEOTIDE SEQUENCE [LARGE SCALE GENOMIC DNA]</scope>
    <source>
        <strain>ATCC 204508 / S288c</strain>
    </source>
</reference>
<reference key="2">
    <citation type="journal article" date="2014" name="G3 (Bethesda)">
        <title>The reference genome sequence of Saccharomyces cerevisiae: Then and now.</title>
        <authorList>
            <person name="Engel S.R."/>
            <person name="Dietrich F.S."/>
            <person name="Fisk D.G."/>
            <person name="Binkley G."/>
            <person name="Balakrishnan R."/>
            <person name="Costanzo M.C."/>
            <person name="Dwight S.S."/>
            <person name="Hitz B.C."/>
            <person name="Karra K."/>
            <person name="Nash R.S."/>
            <person name="Weng S."/>
            <person name="Wong E.D."/>
            <person name="Lloyd P."/>
            <person name="Skrzypek M.S."/>
            <person name="Miyasato S.R."/>
            <person name="Simison M."/>
            <person name="Cherry J.M."/>
        </authorList>
    </citation>
    <scope>GENOME REANNOTATION</scope>
    <source>
        <strain>ATCC 204508 / S288c</strain>
    </source>
</reference>
<reference key="3">
    <citation type="journal article" date="2007" name="Genome Res.">
        <title>Approaching a complete repository of sequence-verified protein-encoding clones for Saccharomyces cerevisiae.</title>
        <authorList>
            <person name="Hu Y."/>
            <person name="Rolfs A."/>
            <person name="Bhullar B."/>
            <person name="Murthy T.V.S."/>
            <person name="Zhu C."/>
            <person name="Berger M.F."/>
            <person name="Camargo A.A."/>
            <person name="Kelley F."/>
            <person name="McCarron S."/>
            <person name="Jepson D."/>
            <person name="Richardson A."/>
            <person name="Raphael J."/>
            <person name="Moreira D."/>
            <person name="Taycher E."/>
            <person name="Zuo D."/>
            <person name="Mohr S."/>
            <person name="Kane M.F."/>
            <person name="Williamson J."/>
            <person name="Simpson A.J.G."/>
            <person name="Bulyk M.L."/>
            <person name="Harlow E."/>
            <person name="Marsischky G."/>
            <person name="Kolodner R.D."/>
            <person name="LaBaer J."/>
        </authorList>
    </citation>
    <scope>NUCLEOTIDE SEQUENCE [GENOMIC DNA]</scope>
    <source>
        <strain>ATCC 204508 / S288c</strain>
    </source>
</reference>
<reference key="4">
    <citation type="journal article" date="1999" name="Mol. Cell. Biol.">
        <title>Erf2, a novel gene product that affects the localization and palmitoylation of Ras2 in Saccharomyces cerevisiae.</title>
        <authorList>
            <person name="Bartels D.J."/>
            <person name="Mitchell D.A."/>
            <person name="Dong X."/>
            <person name="Deschenes R.J."/>
        </authorList>
    </citation>
    <scope>MUTAGENESIS OF LYS-173; ARG-182; CYS-189; ASP-200 AND PHE-218</scope>
    <scope>SUBCELLULAR LOCATION</scope>
</reference>
<reference key="5">
    <citation type="journal article" date="2002" name="J. Biol. Chem.">
        <title>Identification of a Ras palmitoyltransferase in Saccharomyces cerevisiae.</title>
        <authorList>
            <person name="Lobo S."/>
            <person name="Greentree W.K."/>
            <person name="Linder M.E."/>
            <person name="Deschenes R.J."/>
        </authorList>
    </citation>
    <scope>FUNCTION</scope>
    <scope>MUTAGENESIS OF CYS-189; HIS-201 AND CYS-203</scope>
    <scope>INTERACTION WITH SHR5</scope>
</reference>
<reference key="6">
    <citation type="journal article" date="2002" name="J. Biol. Chem.">
        <title>Erf4p and Erf2p form an endoplasmic reticulum-associated complex involved in the plasma membrane localization of yeast Ras proteins.</title>
        <authorList>
            <person name="Zhao L."/>
            <person name="Lobo S."/>
            <person name="Dong X."/>
            <person name="Ault A.D."/>
            <person name="Deschenes R.J."/>
        </authorList>
    </citation>
    <scope>INTERACTION WITH SHR5</scope>
    <scope>SUBCELLULAR LOCATION</scope>
</reference>
<reference key="7">
    <citation type="journal article" date="2006" name="Proc. Natl. Acad. Sci. U.S.A.">
        <title>A global topology map of the Saccharomyces cerevisiae membrane proteome.</title>
        <authorList>
            <person name="Kim H."/>
            <person name="Melen K."/>
            <person name="Oesterberg M."/>
            <person name="von Heijne G."/>
        </authorList>
    </citation>
    <scope>TOPOLOGY [LARGE SCALE ANALYSIS]</scope>
    <source>
        <strain>ATCC 208353 / W303-1A</strain>
    </source>
</reference>
<proteinExistence type="evidence at protein level"/>
<comment type="function">
    <text evidence="7">The ERF2-SHR5 complex is a palmitoyltransferase specific for Ras proteins. Palmitoylates RAS2, which is required for its proper plasma membrane localization.</text>
</comment>
<comment type="catalytic activity">
    <reaction evidence="1">
        <text>L-cysteinyl-[protein] + hexadecanoyl-CoA = S-hexadecanoyl-L-cysteinyl-[protein] + CoA</text>
        <dbReference type="Rhea" id="RHEA:36683"/>
        <dbReference type="Rhea" id="RHEA-COMP:10131"/>
        <dbReference type="Rhea" id="RHEA-COMP:11032"/>
        <dbReference type="ChEBI" id="CHEBI:29950"/>
        <dbReference type="ChEBI" id="CHEBI:57287"/>
        <dbReference type="ChEBI" id="CHEBI:57379"/>
        <dbReference type="ChEBI" id="CHEBI:74151"/>
        <dbReference type="EC" id="2.3.1.225"/>
    </reaction>
</comment>
<comment type="subunit">
    <text evidence="7 8">Interacts with SHR5.</text>
</comment>
<comment type="interaction">
    <interactant intactId="EBI-37230">
        <id>Q06551</id>
    </interactant>
    <interactant intactId="EBI-2087870">
        <id>P41912</id>
        <label>SHR5</label>
    </interactant>
    <organismsDiffer>false</organismsDiffer>
    <experiments>2</experiments>
</comment>
<comment type="subcellular location">
    <subcellularLocation>
        <location evidence="6 8">Endoplasmic reticulum membrane</location>
        <topology evidence="6 8">Multi-pass membrane protein</topology>
    </subcellularLocation>
</comment>
<comment type="domain">
    <text>The DHHC domain is required for palmitoyltransferase activity.</text>
</comment>
<comment type="PTM">
    <text evidence="2">Autopalmitoylated.</text>
</comment>
<comment type="similarity">
    <text evidence="9">Belongs to the DHHC palmitoyltransferase family. ERF2/ZDHHC9 subfamily.</text>
</comment>
<keyword id="KW-0002">3D-structure</keyword>
<keyword id="KW-0012">Acyltransferase</keyword>
<keyword id="KW-0256">Endoplasmic reticulum</keyword>
<keyword id="KW-0449">Lipoprotein</keyword>
<keyword id="KW-0472">Membrane</keyword>
<keyword id="KW-0564">Palmitate</keyword>
<keyword id="KW-1185">Reference proteome</keyword>
<keyword id="KW-0808">Transferase</keyword>
<keyword id="KW-0812">Transmembrane</keyword>
<keyword id="KW-1133">Transmembrane helix</keyword>
<sequence>MALVSRRSTRSESTSITKEEHTGEGSLTKLFFRWLVTLEGDQDINDGKGYISLPNVSNYIFFLGGRFRTVKGAKPLWLGVLLAIVCPMVLFSIFEAHKLWHTQNGYKVLVIFFYYFWVITLASFIRTATSDPGVLPRNIHLSQLRNNYQIPQEYYNLITLPTHSSISKDITIKYCPSCRIWRPPRSSHCSTCNVCVMVHDHHCIWVNNCIGKRNYRFFLIFLLGAILSSVILLTNCAIHIARESGGPRDCPVAILLLCYAGLTLWYPAILFTYHIFMAGNQQTTREFLKGIGSKKNPVFHRVVKEENIYNKGSFLKNMGHLMLEPRGPSFVSARKPHEAGDWRFMDLSPAHSFEKIQKI</sequence>
<evidence type="ECO:0000250" key="1">
    <source>
        <dbReference type="UniProtKB" id="Q8VDZ4"/>
    </source>
</evidence>
<evidence type="ECO:0000250" key="2">
    <source>
        <dbReference type="UniProtKB" id="Q9UIJ5"/>
    </source>
</evidence>
<evidence type="ECO:0000255" key="3"/>
<evidence type="ECO:0000255" key="4">
    <source>
        <dbReference type="PROSITE-ProRule" id="PRU00067"/>
    </source>
</evidence>
<evidence type="ECO:0000256" key="5">
    <source>
        <dbReference type="SAM" id="MobiDB-lite"/>
    </source>
</evidence>
<evidence type="ECO:0000269" key="6">
    <source>
    </source>
</evidence>
<evidence type="ECO:0000269" key="7">
    <source>
    </source>
</evidence>
<evidence type="ECO:0000269" key="8">
    <source>
    </source>
</evidence>
<evidence type="ECO:0000305" key="9"/>
<evidence type="ECO:0007829" key="10">
    <source>
        <dbReference type="PDB" id="8HFC"/>
    </source>
</evidence>